<gene>
    <name type="primary">rpsL</name>
    <name type="synonym">rps12</name>
    <name type="ordered locus">MT0710</name>
</gene>
<organism>
    <name type="scientific">Mycobacterium tuberculosis (strain CDC 1551 / Oshkosh)</name>
    <dbReference type="NCBI Taxonomy" id="83331"/>
    <lineage>
        <taxon>Bacteria</taxon>
        <taxon>Bacillati</taxon>
        <taxon>Actinomycetota</taxon>
        <taxon>Actinomycetes</taxon>
        <taxon>Mycobacteriales</taxon>
        <taxon>Mycobacteriaceae</taxon>
        <taxon>Mycobacterium</taxon>
        <taxon>Mycobacterium tuberculosis complex</taxon>
    </lineage>
</organism>
<protein>
    <recommendedName>
        <fullName evidence="3">Small ribosomal subunit protein uS12</fullName>
    </recommendedName>
    <alternativeName>
        <fullName>30S ribosomal protein S12</fullName>
    </alternativeName>
</protein>
<reference key="1">
    <citation type="journal article" date="2002" name="J. Bacteriol.">
        <title>Whole-genome comparison of Mycobacterium tuberculosis clinical and laboratory strains.</title>
        <authorList>
            <person name="Fleischmann R.D."/>
            <person name="Alland D."/>
            <person name="Eisen J.A."/>
            <person name="Carpenter L."/>
            <person name="White O."/>
            <person name="Peterson J.D."/>
            <person name="DeBoy R.T."/>
            <person name="Dodson R.J."/>
            <person name="Gwinn M.L."/>
            <person name="Haft D.H."/>
            <person name="Hickey E.K."/>
            <person name="Kolonay J.F."/>
            <person name="Nelson W.C."/>
            <person name="Umayam L.A."/>
            <person name="Ermolaeva M.D."/>
            <person name="Salzberg S.L."/>
            <person name="Delcher A."/>
            <person name="Utterback T.R."/>
            <person name="Weidman J.F."/>
            <person name="Khouri H.M."/>
            <person name="Gill J."/>
            <person name="Mikula A."/>
            <person name="Bishai W."/>
            <person name="Jacobs W.R. Jr."/>
            <person name="Venter J.C."/>
            <person name="Fraser C.M."/>
        </authorList>
    </citation>
    <scope>NUCLEOTIDE SEQUENCE [LARGE SCALE GENOMIC DNA]</scope>
    <source>
        <strain>CDC 1551 / Oshkosh</strain>
    </source>
</reference>
<name>RS12_MYCTO</name>
<feature type="chain" id="PRO_0000428242" description="Small ribosomal subunit protein uS12">
    <location>
        <begin position="1"/>
        <end position="124"/>
    </location>
</feature>
<feature type="region of interest" description="Disordered" evidence="2">
    <location>
        <begin position="105"/>
        <end position="124"/>
    </location>
</feature>
<feature type="compositionally biased region" description="Basic residues" evidence="2">
    <location>
        <begin position="108"/>
        <end position="118"/>
    </location>
</feature>
<sequence>MPTIQQLVRKGRRDKISKVKTAALKGSPQRRGVCTRVYTTTPKKPNSALRKVARVKLTSQVEVTAYIPGEGHNLQEHSMVLVRGGRVKDLPGVRYKIIRGSLDTQGVKNRKQARSRYGAKKEKG</sequence>
<proteinExistence type="inferred from homology"/>
<comment type="function">
    <text evidence="1">With S4 and S5 plays an important role in translational accuracy.</text>
</comment>
<comment type="function">
    <text evidence="1">Interacts with and stabilizes bases of the 16S rRNA that are involved in tRNA selection in the A site and with the mRNA backbone. Located at the interface of the 30S and 50S subunits, it traverses the body of the 30S subunit contacting proteins on the other side and probably holding the rRNA structure together. The combined cluster of proteins S8, S12 and S17 appears to hold together the shoulder and platform of the 30S subunit (By similarity).</text>
</comment>
<comment type="subunit">
    <text evidence="1">Part of the 30S ribosomal subunit. Contacts proteins S8 and S17. May interact with IF1 in the 30S initiation complex (By similarity).</text>
</comment>
<comment type="similarity">
    <text evidence="3">Belongs to the universal ribosomal protein uS12 family.</text>
</comment>
<comment type="caution">
    <text evidence="3">Because the enzyme that would modify Asp-89 to 3-methylthioaspartic acid has not been found in the proteome of this organism, that modification is not predicted.</text>
</comment>
<keyword id="KW-0046">Antibiotic resistance</keyword>
<keyword id="KW-1185">Reference proteome</keyword>
<keyword id="KW-0687">Ribonucleoprotein</keyword>
<keyword id="KW-0689">Ribosomal protein</keyword>
<keyword id="KW-0694">RNA-binding</keyword>
<keyword id="KW-0699">rRNA-binding</keyword>
<keyword id="KW-0820">tRNA-binding</keyword>
<evidence type="ECO:0000250" key="1"/>
<evidence type="ECO:0000256" key="2">
    <source>
        <dbReference type="SAM" id="MobiDB-lite"/>
    </source>
</evidence>
<evidence type="ECO:0000305" key="3"/>
<accession>P9WH62</accession>
<accession>L0T4E7</accession>
<accession>P41196</accession>
<accession>Q933X1</accession>
<accession>Q93MR7</accession>
<accession>Q93MR8</accession>
<accession>Q93T44</accession>
<dbReference type="EMBL" id="AE000516">
    <property type="protein sequence ID" value="AAK44936.1"/>
    <property type="molecule type" value="Genomic_DNA"/>
</dbReference>
<dbReference type="PIR" id="S39591">
    <property type="entry name" value="S39591"/>
</dbReference>
<dbReference type="RefSeq" id="WP_003403453.1">
    <property type="nucleotide sequence ID" value="NZ_KK341227.1"/>
</dbReference>
<dbReference type="SMR" id="P9WH62"/>
<dbReference type="DrugCentral" id="P9WH62"/>
<dbReference type="GeneID" id="45424644"/>
<dbReference type="KEGG" id="mtc:MT0710"/>
<dbReference type="PATRIC" id="fig|83331.31.peg.758"/>
<dbReference type="HOGENOM" id="CLU_104295_1_2_11"/>
<dbReference type="Proteomes" id="UP000001020">
    <property type="component" value="Chromosome"/>
</dbReference>
<dbReference type="GO" id="GO:0015935">
    <property type="term" value="C:small ribosomal subunit"/>
    <property type="evidence" value="ECO:0007669"/>
    <property type="project" value="InterPro"/>
</dbReference>
<dbReference type="GO" id="GO:0019843">
    <property type="term" value="F:rRNA binding"/>
    <property type="evidence" value="ECO:0007669"/>
    <property type="project" value="UniProtKB-UniRule"/>
</dbReference>
<dbReference type="GO" id="GO:0003735">
    <property type="term" value="F:structural constituent of ribosome"/>
    <property type="evidence" value="ECO:0007669"/>
    <property type="project" value="InterPro"/>
</dbReference>
<dbReference type="GO" id="GO:0000049">
    <property type="term" value="F:tRNA binding"/>
    <property type="evidence" value="ECO:0007669"/>
    <property type="project" value="UniProtKB-UniRule"/>
</dbReference>
<dbReference type="GO" id="GO:0046677">
    <property type="term" value="P:response to antibiotic"/>
    <property type="evidence" value="ECO:0007669"/>
    <property type="project" value="UniProtKB-KW"/>
</dbReference>
<dbReference type="GO" id="GO:0006412">
    <property type="term" value="P:translation"/>
    <property type="evidence" value="ECO:0007669"/>
    <property type="project" value="UniProtKB-UniRule"/>
</dbReference>
<dbReference type="CDD" id="cd03368">
    <property type="entry name" value="Ribosomal_S12"/>
    <property type="match status" value="1"/>
</dbReference>
<dbReference type="FunFam" id="2.40.50.140:FF:000001">
    <property type="entry name" value="30S ribosomal protein S12"/>
    <property type="match status" value="1"/>
</dbReference>
<dbReference type="Gene3D" id="2.40.50.140">
    <property type="entry name" value="Nucleic acid-binding proteins"/>
    <property type="match status" value="1"/>
</dbReference>
<dbReference type="HAMAP" id="MF_00403_B">
    <property type="entry name" value="Ribosomal_uS12_B"/>
    <property type="match status" value="1"/>
</dbReference>
<dbReference type="InterPro" id="IPR012340">
    <property type="entry name" value="NA-bd_OB-fold"/>
</dbReference>
<dbReference type="InterPro" id="IPR006032">
    <property type="entry name" value="Ribosomal_uS12"/>
</dbReference>
<dbReference type="InterPro" id="IPR005679">
    <property type="entry name" value="Ribosomal_uS12_bac"/>
</dbReference>
<dbReference type="NCBIfam" id="TIGR00981">
    <property type="entry name" value="rpsL_bact"/>
    <property type="match status" value="1"/>
</dbReference>
<dbReference type="PANTHER" id="PTHR11652">
    <property type="entry name" value="30S RIBOSOMAL PROTEIN S12 FAMILY MEMBER"/>
    <property type="match status" value="1"/>
</dbReference>
<dbReference type="Pfam" id="PF00164">
    <property type="entry name" value="Ribosom_S12_S23"/>
    <property type="match status" value="1"/>
</dbReference>
<dbReference type="PIRSF" id="PIRSF002133">
    <property type="entry name" value="Ribosomal_S12/S23"/>
    <property type="match status" value="1"/>
</dbReference>
<dbReference type="PRINTS" id="PR01034">
    <property type="entry name" value="RIBOSOMALS12"/>
</dbReference>
<dbReference type="SUPFAM" id="SSF50249">
    <property type="entry name" value="Nucleic acid-binding proteins"/>
    <property type="match status" value="1"/>
</dbReference>
<dbReference type="PROSITE" id="PS00055">
    <property type="entry name" value="RIBOSOMAL_S12"/>
    <property type="match status" value="1"/>
</dbReference>